<keyword id="KW-0067">ATP-binding</keyword>
<keyword id="KW-0436">Ligase</keyword>
<keyword id="KW-0547">Nucleotide-binding</keyword>
<keyword id="KW-0648">Protein biosynthesis</keyword>
<keyword id="KW-1185">Reference proteome</keyword>
<comment type="function">
    <text evidence="1">Allows the formation of correctly charged Asn-tRNA(Asn) or Gln-tRNA(Gln) through the transamidation of misacylated Asp-tRNA(Asn) or Glu-tRNA(Gln) in organisms which lack either or both of asparaginyl-tRNA or glutaminyl-tRNA synthetases. The reaction takes place in the presence of glutamine and ATP through an activated phospho-Asp-tRNA(Asn) or phospho-Glu-tRNA(Gln).</text>
</comment>
<comment type="catalytic activity">
    <reaction evidence="1">
        <text>L-glutamyl-tRNA(Gln) + L-glutamine + ATP + H2O = L-glutaminyl-tRNA(Gln) + L-glutamate + ADP + phosphate + H(+)</text>
        <dbReference type="Rhea" id="RHEA:17521"/>
        <dbReference type="Rhea" id="RHEA-COMP:9681"/>
        <dbReference type="Rhea" id="RHEA-COMP:9684"/>
        <dbReference type="ChEBI" id="CHEBI:15377"/>
        <dbReference type="ChEBI" id="CHEBI:15378"/>
        <dbReference type="ChEBI" id="CHEBI:29985"/>
        <dbReference type="ChEBI" id="CHEBI:30616"/>
        <dbReference type="ChEBI" id="CHEBI:43474"/>
        <dbReference type="ChEBI" id="CHEBI:58359"/>
        <dbReference type="ChEBI" id="CHEBI:78520"/>
        <dbReference type="ChEBI" id="CHEBI:78521"/>
        <dbReference type="ChEBI" id="CHEBI:456216"/>
    </reaction>
</comment>
<comment type="catalytic activity">
    <reaction evidence="1">
        <text>L-aspartyl-tRNA(Asn) + L-glutamine + ATP + H2O = L-asparaginyl-tRNA(Asn) + L-glutamate + ADP + phosphate + 2 H(+)</text>
        <dbReference type="Rhea" id="RHEA:14513"/>
        <dbReference type="Rhea" id="RHEA-COMP:9674"/>
        <dbReference type="Rhea" id="RHEA-COMP:9677"/>
        <dbReference type="ChEBI" id="CHEBI:15377"/>
        <dbReference type="ChEBI" id="CHEBI:15378"/>
        <dbReference type="ChEBI" id="CHEBI:29985"/>
        <dbReference type="ChEBI" id="CHEBI:30616"/>
        <dbReference type="ChEBI" id="CHEBI:43474"/>
        <dbReference type="ChEBI" id="CHEBI:58359"/>
        <dbReference type="ChEBI" id="CHEBI:78515"/>
        <dbReference type="ChEBI" id="CHEBI:78516"/>
        <dbReference type="ChEBI" id="CHEBI:456216"/>
    </reaction>
</comment>
<comment type="subunit">
    <text evidence="1">Heterotrimer of A, B and C subunits.</text>
</comment>
<comment type="similarity">
    <text evidence="1">Belongs to the GatB/GatE family. GatB subfamily.</text>
</comment>
<gene>
    <name evidence="1" type="primary">gatB</name>
    <name type="ordered locus">Krad_1319</name>
</gene>
<dbReference type="EC" id="6.3.5.-" evidence="1"/>
<dbReference type="EMBL" id="CP000750">
    <property type="protein sequence ID" value="ABS02807.1"/>
    <property type="molecule type" value="Genomic_DNA"/>
</dbReference>
<dbReference type="RefSeq" id="WP_012084337.1">
    <property type="nucleotide sequence ID" value="NC_009664.2"/>
</dbReference>
<dbReference type="SMR" id="A6W7L8"/>
<dbReference type="STRING" id="266940.Krad_1319"/>
<dbReference type="KEGG" id="kra:Krad_1319"/>
<dbReference type="eggNOG" id="COG0064">
    <property type="taxonomic scope" value="Bacteria"/>
</dbReference>
<dbReference type="HOGENOM" id="CLU_019240_0_0_11"/>
<dbReference type="OrthoDB" id="9804078at2"/>
<dbReference type="Proteomes" id="UP000001116">
    <property type="component" value="Chromosome"/>
</dbReference>
<dbReference type="GO" id="GO:0050566">
    <property type="term" value="F:asparaginyl-tRNA synthase (glutamine-hydrolyzing) activity"/>
    <property type="evidence" value="ECO:0007669"/>
    <property type="project" value="RHEA"/>
</dbReference>
<dbReference type="GO" id="GO:0005524">
    <property type="term" value="F:ATP binding"/>
    <property type="evidence" value="ECO:0007669"/>
    <property type="project" value="UniProtKB-KW"/>
</dbReference>
<dbReference type="GO" id="GO:0050567">
    <property type="term" value="F:glutaminyl-tRNA synthase (glutamine-hydrolyzing) activity"/>
    <property type="evidence" value="ECO:0007669"/>
    <property type="project" value="UniProtKB-UniRule"/>
</dbReference>
<dbReference type="GO" id="GO:0070681">
    <property type="term" value="P:glutaminyl-tRNAGln biosynthesis via transamidation"/>
    <property type="evidence" value="ECO:0007669"/>
    <property type="project" value="TreeGrafter"/>
</dbReference>
<dbReference type="GO" id="GO:0006412">
    <property type="term" value="P:translation"/>
    <property type="evidence" value="ECO:0007669"/>
    <property type="project" value="UniProtKB-UniRule"/>
</dbReference>
<dbReference type="FunFam" id="1.10.10.410:FF:000001">
    <property type="entry name" value="Aspartyl/glutamyl-tRNA(Asn/Gln) amidotransferase subunit B"/>
    <property type="match status" value="1"/>
</dbReference>
<dbReference type="Gene3D" id="1.10.10.410">
    <property type="match status" value="1"/>
</dbReference>
<dbReference type="HAMAP" id="MF_00121">
    <property type="entry name" value="GatB"/>
    <property type="match status" value="1"/>
</dbReference>
<dbReference type="InterPro" id="IPR017959">
    <property type="entry name" value="Asn/Gln-tRNA_amidoTrfase_suB/E"/>
</dbReference>
<dbReference type="InterPro" id="IPR006075">
    <property type="entry name" value="Asn/Gln-tRNA_Trfase_suB/E_cat"/>
</dbReference>
<dbReference type="InterPro" id="IPR018027">
    <property type="entry name" value="Asn/Gln_amidotransferase"/>
</dbReference>
<dbReference type="InterPro" id="IPR003789">
    <property type="entry name" value="Asn/Gln_tRNA_amidoTrase-B-like"/>
</dbReference>
<dbReference type="InterPro" id="IPR004413">
    <property type="entry name" value="GatB"/>
</dbReference>
<dbReference type="InterPro" id="IPR023168">
    <property type="entry name" value="GatB_Yqey_C_2"/>
</dbReference>
<dbReference type="InterPro" id="IPR017958">
    <property type="entry name" value="Gln-tRNA_amidoTrfase_suB_CS"/>
</dbReference>
<dbReference type="InterPro" id="IPR014746">
    <property type="entry name" value="Gln_synth/guanido_kin_cat_dom"/>
</dbReference>
<dbReference type="NCBIfam" id="TIGR00133">
    <property type="entry name" value="gatB"/>
    <property type="match status" value="1"/>
</dbReference>
<dbReference type="NCBIfam" id="NF004012">
    <property type="entry name" value="PRK05477.1-2"/>
    <property type="match status" value="1"/>
</dbReference>
<dbReference type="NCBIfam" id="NF004013">
    <property type="entry name" value="PRK05477.1-3"/>
    <property type="match status" value="1"/>
</dbReference>
<dbReference type="NCBIfam" id="NF004014">
    <property type="entry name" value="PRK05477.1-4"/>
    <property type="match status" value="1"/>
</dbReference>
<dbReference type="PANTHER" id="PTHR11659">
    <property type="entry name" value="GLUTAMYL-TRNA GLN AMIDOTRANSFERASE SUBUNIT B MITOCHONDRIAL AND PROKARYOTIC PET112-RELATED"/>
    <property type="match status" value="1"/>
</dbReference>
<dbReference type="PANTHER" id="PTHR11659:SF0">
    <property type="entry name" value="GLUTAMYL-TRNA(GLN) AMIDOTRANSFERASE SUBUNIT B, MITOCHONDRIAL"/>
    <property type="match status" value="1"/>
</dbReference>
<dbReference type="Pfam" id="PF02934">
    <property type="entry name" value="GatB_N"/>
    <property type="match status" value="1"/>
</dbReference>
<dbReference type="Pfam" id="PF02637">
    <property type="entry name" value="GatB_Yqey"/>
    <property type="match status" value="1"/>
</dbReference>
<dbReference type="SMART" id="SM00845">
    <property type="entry name" value="GatB_Yqey"/>
    <property type="match status" value="1"/>
</dbReference>
<dbReference type="SUPFAM" id="SSF89095">
    <property type="entry name" value="GatB/YqeY motif"/>
    <property type="match status" value="1"/>
</dbReference>
<dbReference type="SUPFAM" id="SSF55931">
    <property type="entry name" value="Glutamine synthetase/guanido kinase"/>
    <property type="match status" value="1"/>
</dbReference>
<dbReference type="PROSITE" id="PS01234">
    <property type="entry name" value="GATB"/>
    <property type="match status" value="1"/>
</dbReference>
<organism>
    <name type="scientific">Kineococcus radiotolerans (strain ATCC BAA-149 / DSM 14245 / SRS30216)</name>
    <dbReference type="NCBI Taxonomy" id="266940"/>
    <lineage>
        <taxon>Bacteria</taxon>
        <taxon>Bacillati</taxon>
        <taxon>Actinomycetota</taxon>
        <taxon>Actinomycetes</taxon>
        <taxon>Kineosporiales</taxon>
        <taxon>Kineosporiaceae</taxon>
        <taxon>Kineococcus</taxon>
    </lineage>
</organism>
<evidence type="ECO:0000255" key="1">
    <source>
        <dbReference type="HAMAP-Rule" id="MF_00121"/>
    </source>
</evidence>
<protein>
    <recommendedName>
        <fullName evidence="1">Aspartyl/glutamyl-tRNA(Asn/Gln) amidotransferase subunit B</fullName>
        <shortName evidence="1">Asp/Glu-ADT subunit B</shortName>
        <ecNumber evidence="1">6.3.5.-</ecNumber>
    </recommendedName>
</protein>
<name>GATB_KINRD</name>
<accession>A6W7L8</accession>
<sequence>MSVELVDYDEAVAEFDPVLGLEVHVELNTATKMFSGSPTEFGAEPNTQVDPTSLGLPGAMPVLNAKALESAIRIGLALNCSIAERCRFARKNYFYPDMPKNFQTSQYDEPIAFDGYLDVDVPASEDGTKPAFTYRVLIERAHMEEDTGKSLHVGGSTGRIHGAEFSLVDYNRAGIPLIEIVTRPLEGTGDRAPDVARAYVAALRDVLRSLDVSDVKMEQGSLRCDVNLSLRPTPQSPLGTRSETKNVNSLRSVERAVRYEVSRHAAVLRSGAKVVQETRHWHEDTGLTTSGREKSDAEDYRYFPEPDLVPIVPDRAWVEELRAALPEPPAQRRKRLHAEWGFSDLEFRDLVNAGAIDLVEATVAAGASPAAARKWWSGELARRANADGVELSALAVGPADVAELAALVEAGKLTDRLAREALEGVLAGEGSVAEVVEARGLVVVQDDGALVAAVEKVLAANPDVVEKIRGGKAQAAGALIGQVMKEMRGKADAARIRELVLERVG</sequence>
<feature type="chain" id="PRO_1000076162" description="Aspartyl/glutamyl-tRNA(Asn/Gln) amidotransferase subunit B">
    <location>
        <begin position="1"/>
        <end position="505"/>
    </location>
</feature>
<reference key="1">
    <citation type="journal article" date="2008" name="PLoS ONE">
        <title>Survival in nuclear waste, extreme resistance, and potential applications gleaned from the genome sequence of Kineococcus radiotolerans SRS30216.</title>
        <authorList>
            <person name="Bagwell C.E."/>
            <person name="Bhat S."/>
            <person name="Hawkins G.M."/>
            <person name="Smith B.W."/>
            <person name="Biswas T."/>
            <person name="Hoover T.R."/>
            <person name="Saunders E."/>
            <person name="Han C.S."/>
            <person name="Tsodikov O.V."/>
            <person name="Shimkets L.J."/>
        </authorList>
    </citation>
    <scope>NUCLEOTIDE SEQUENCE [LARGE SCALE GENOMIC DNA]</scope>
    <source>
        <strain>ATCC BAA-149 / DSM 14245 / SRS30216</strain>
    </source>
</reference>
<proteinExistence type="inferred from homology"/>